<dbReference type="PIR" id="A05305">
    <property type="entry name" value="A05305"/>
</dbReference>
<dbReference type="GO" id="GO:0046872">
    <property type="term" value="F:metal ion binding"/>
    <property type="evidence" value="ECO:0007669"/>
    <property type="project" value="UniProtKB-KW"/>
</dbReference>
<dbReference type="GO" id="GO:0005344">
    <property type="term" value="F:oxygen carrier activity"/>
    <property type="evidence" value="ECO:0007669"/>
    <property type="project" value="UniProtKB-KW"/>
</dbReference>
<accession>P18992</accession>
<proteinExistence type="evidence at protein level"/>
<evidence type="ECO:0000255" key="1">
    <source>
        <dbReference type="PROSITE-ProRule" id="PRU00238"/>
    </source>
</evidence>
<keyword id="KW-0903">Direct protein sequencing</keyword>
<keyword id="KW-0349">Heme</keyword>
<keyword id="KW-0408">Iron</keyword>
<keyword id="KW-0479">Metal-binding</keyword>
<keyword id="KW-0561">Oxygen transport</keyword>
<keyword id="KW-0813">Transport</keyword>
<feature type="chain" id="PRO_0000053146" description="Hemoglobin subunit beta-2">
    <location>
        <begin position="1" status="less than"/>
        <end position="19" status="greater than"/>
    </location>
</feature>
<feature type="non-terminal residue">
    <location>
        <position position="1"/>
    </location>
</feature>
<feature type="non-terminal residue">
    <location>
        <position position="19"/>
    </location>
</feature>
<name>HBB2_SAAHA</name>
<reference key="1">
    <citation type="journal article" date="1983" name="FEBS Lett.">
        <title>Characterization of hemoglobin from the lizard Uromastix hardwickii.</title>
        <authorList>
            <person name="Naqvi S."/>
            <person name="Zaidi Z.H."/>
            <person name="von Bahr-Lindstroem H."/>
            <person name="Carlquist M."/>
            <person name="Joernvall H."/>
        </authorList>
    </citation>
    <scope>PROTEIN SEQUENCE</scope>
</reference>
<organism>
    <name type="scientific">Saara hardwickii</name>
    <name type="common">Indian spiny-tailed lizard</name>
    <name type="synonym">Uromastyx hardwickii</name>
    <dbReference type="NCBI Taxonomy" id="40250"/>
    <lineage>
        <taxon>Eukaryota</taxon>
        <taxon>Metazoa</taxon>
        <taxon>Chordata</taxon>
        <taxon>Craniata</taxon>
        <taxon>Vertebrata</taxon>
        <taxon>Euteleostomi</taxon>
        <taxon>Lepidosauria</taxon>
        <taxon>Squamata</taxon>
        <taxon>Bifurcata</taxon>
        <taxon>Unidentata</taxon>
        <taxon>Episquamata</taxon>
        <taxon>Toxicofera</taxon>
        <taxon>Iguania</taxon>
        <taxon>Acrodonta</taxon>
        <taxon>Agamidae</taxon>
        <taxon>Uromastycinae</taxon>
        <taxon>Saara</taxon>
    </lineage>
</organism>
<sequence>FFGDFGNISSAAAITGNPK</sequence>
<protein>
    <recommendedName>
        <fullName>Hemoglobin subunit beta-2</fullName>
    </recommendedName>
    <alternativeName>
        <fullName>Beta-2-globin</fullName>
    </alternativeName>
    <alternativeName>
        <fullName>Hemoglobin beta-2 chain</fullName>
    </alternativeName>
</protein>
<comment type="function">
    <text>Involved in oxygen transport from the lung to the various peripheral tissues.</text>
</comment>
<comment type="subunit">
    <text>Heterotetramer of two alpha chains and two beta chains.</text>
</comment>
<comment type="tissue specificity">
    <text>Red blood cells.</text>
</comment>
<comment type="similarity">
    <text evidence="1">Belongs to the globin family.</text>
</comment>